<feature type="chain" id="PRO_0000112106" description="Pyruvate kinase">
    <location>
        <begin position="1"/>
        <end position="532"/>
    </location>
</feature>
<feature type="binding site" evidence="1">
    <location>
        <position position="63"/>
    </location>
    <ligand>
        <name>substrate</name>
    </ligand>
</feature>
<feature type="binding site" evidence="2">
    <location>
        <begin position="65"/>
        <end position="68"/>
    </location>
    <ligand>
        <name>ATP</name>
        <dbReference type="ChEBI" id="CHEBI:30616"/>
    </ligand>
</feature>
<feature type="binding site" evidence="1">
    <location>
        <position position="65"/>
    </location>
    <ligand>
        <name>K(+)</name>
        <dbReference type="ChEBI" id="CHEBI:29103"/>
    </ligand>
</feature>
<feature type="binding site" evidence="1">
    <location>
        <position position="67"/>
    </location>
    <ligand>
        <name>K(+)</name>
        <dbReference type="ChEBI" id="CHEBI:29103"/>
    </ligand>
</feature>
<feature type="binding site" evidence="1">
    <location>
        <position position="99"/>
    </location>
    <ligand>
        <name>K(+)</name>
        <dbReference type="ChEBI" id="CHEBI:29103"/>
    </ligand>
</feature>
<feature type="binding site" evidence="1">
    <location>
        <position position="100"/>
    </location>
    <ligand>
        <name>K(+)</name>
        <dbReference type="ChEBI" id="CHEBI:29103"/>
    </ligand>
</feature>
<feature type="binding site" evidence="2">
    <location>
        <position position="106"/>
    </location>
    <ligand>
        <name>ATP</name>
        <dbReference type="ChEBI" id="CHEBI:30616"/>
    </ligand>
</feature>
<feature type="binding site" evidence="2">
    <location>
        <position position="191"/>
    </location>
    <ligand>
        <name>ATP</name>
        <dbReference type="ChEBI" id="CHEBI:30616"/>
    </ligand>
</feature>
<feature type="binding site" evidence="3">
    <location>
        <position position="256"/>
    </location>
    <ligand>
        <name>Mg(2+)</name>
        <dbReference type="ChEBI" id="CHEBI:18420"/>
    </ligand>
</feature>
<feature type="binding site" evidence="1">
    <location>
        <position position="279"/>
    </location>
    <ligand>
        <name>substrate</name>
    </ligand>
</feature>
<feature type="binding site" evidence="1">
    <location>
        <position position="280"/>
    </location>
    <ligand>
        <name>Mg(2+)</name>
        <dbReference type="ChEBI" id="CHEBI:18420"/>
    </ligand>
</feature>
<feature type="binding site" evidence="1">
    <location>
        <position position="280"/>
    </location>
    <ligand>
        <name>substrate</name>
    </ligand>
</feature>
<feature type="binding site" evidence="1">
    <location>
        <position position="312"/>
    </location>
    <ligand>
        <name>substrate</name>
    </ligand>
</feature>
<feature type="site" description="Transition state stabilizer" evidence="1">
    <location>
        <position position="254"/>
    </location>
</feature>
<sequence>MYPVDGIRSQIEWNTTLNVSDAPVPTETTKYHRKTAIIATIGPKINTVEKLTDVRLAGVNIVRMNFSHGTHEYHQSVIDNTRQMIKNDPHGRPVAIALDTKGPEIRTGQTRDGNDYPIKAGDEFIVTTDPKYSDICDNKVLFVDYANLASVTAPGKLIYIDDGIISLLILSIDGMNLHVRALNNGTLSSRKGVNLPKTDVDLPPLSEKDKDDLRFGIRNGVDMIFASFIRRGEDVRQIREVLGPDGASIKIIVKIENEQGVANFDEILKEADGVMVARGDLGIEIPASQVFLAQKMMIAKCNIVGKPVIVATQMLESMTYNPRPTRAEVSDVANAVLDGSDCVMLSGETAKGSYPVQSVLMMAETCLLAETAICYPPLYDDLRAVQARPTETAETVAIAAVAAAAEQDAKALLVLSTSGETARLVSKYRPKIPIITVTRNEQTARQIHLHRGCYPFWYPEPRGVQNHQWQTDVDNRIRFGLRNALALNVIQPGASIIAVQGWKGGLGHTNTLRILTVPTDPADLELQPLGSL</sequence>
<keyword id="KW-0067">ATP-binding</keyword>
<keyword id="KW-0324">Glycolysis</keyword>
<keyword id="KW-0418">Kinase</keyword>
<keyword id="KW-0460">Magnesium</keyword>
<keyword id="KW-0479">Metal-binding</keyword>
<keyword id="KW-0547">Nucleotide-binding</keyword>
<keyword id="KW-0630">Potassium</keyword>
<keyword id="KW-0670">Pyruvate</keyword>
<keyword id="KW-0808">Transferase</keyword>
<name>KPYK_AGABI</name>
<reference key="1">
    <citation type="submission" date="1996-04" db="EMBL/GenBank/DDBJ databases">
        <title>Sequence of the Agaricus bisporus pkiA gene.</title>
        <authorList>
            <person name="Schaap P.J."/>
            <person name="Mueller Y."/>
            <person name="van Griensven L.J.L.D."/>
            <person name="Visser J."/>
        </authorList>
    </citation>
    <scope>NUCLEOTIDE SEQUENCE</scope>
    <source>
        <strain>Horst H39</strain>
    </source>
</reference>
<reference key="2">
    <citation type="journal article" date="1998" name="Mycol. Res.">
        <title>Biochemical and molecular aspects of growth on fruiting of the edible mushroom Agaricus bisporus.</title>
        <authorList>
            <person name="De Groot P.W.J."/>
            <person name="Visser J."/>
            <person name="van Griensven L.J.L.D."/>
            <person name="Schaap P.J."/>
        </authorList>
        <dbReference type="AGRICOLA" id="IND21972038"/>
    </citation>
    <scope>NUCLEOTIDE SEQUENCE OF 3-532</scope>
    <source>
        <strain>Horst U1</strain>
    </source>
</reference>
<evidence type="ECO:0000250" key="1"/>
<evidence type="ECO:0000250" key="2">
    <source>
        <dbReference type="UniProtKB" id="P14618"/>
    </source>
</evidence>
<evidence type="ECO:0000255" key="3"/>
<evidence type="ECO:0000305" key="4"/>
<organism>
    <name type="scientific">Agaricus bisporus</name>
    <name type="common">White button mushroom</name>
    <dbReference type="NCBI Taxonomy" id="5341"/>
    <lineage>
        <taxon>Eukaryota</taxon>
        <taxon>Fungi</taxon>
        <taxon>Dikarya</taxon>
        <taxon>Basidiomycota</taxon>
        <taxon>Agaricomycotina</taxon>
        <taxon>Agaricomycetes</taxon>
        <taxon>Agaricomycetidae</taxon>
        <taxon>Agaricales</taxon>
        <taxon>Agaricineae</taxon>
        <taxon>Agaricaceae</taxon>
        <taxon>Agaricus</taxon>
    </lineage>
</organism>
<dbReference type="EC" id="2.7.1.40"/>
<dbReference type="EMBL" id="X97579">
    <property type="protein sequence ID" value="CAA66194.1"/>
    <property type="molecule type" value="Genomic_DNA"/>
</dbReference>
<dbReference type="EMBL" id="X91106">
    <property type="protein sequence ID" value="CAA62560.1"/>
    <property type="molecule type" value="mRNA"/>
</dbReference>
<dbReference type="SMR" id="O94122"/>
<dbReference type="UniPathway" id="UPA00109">
    <property type="reaction ID" value="UER00188"/>
</dbReference>
<dbReference type="GO" id="GO:0005524">
    <property type="term" value="F:ATP binding"/>
    <property type="evidence" value="ECO:0007669"/>
    <property type="project" value="UniProtKB-KW"/>
</dbReference>
<dbReference type="GO" id="GO:0016301">
    <property type="term" value="F:kinase activity"/>
    <property type="evidence" value="ECO:0007669"/>
    <property type="project" value="UniProtKB-KW"/>
</dbReference>
<dbReference type="GO" id="GO:0000287">
    <property type="term" value="F:magnesium ion binding"/>
    <property type="evidence" value="ECO:0007669"/>
    <property type="project" value="InterPro"/>
</dbReference>
<dbReference type="GO" id="GO:0030955">
    <property type="term" value="F:potassium ion binding"/>
    <property type="evidence" value="ECO:0007669"/>
    <property type="project" value="InterPro"/>
</dbReference>
<dbReference type="GO" id="GO:0004743">
    <property type="term" value="F:pyruvate kinase activity"/>
    <property type="evidence" value="ECO:0007669"/>
    <property type="project" value="UniProtKB-EC"/>
</dbReference>
<dbReference type="CDD" id="cd00288">
    <property type="entry name" value="Pyruvate_Kinase"/>
    <property type="match status" value="1"/>
</dbReference>
<dbReference type="FunFam" id="2.40.33.10:FF:000001">
    <property type="entry name" value="Pyruvate kinase"/>
    <property type="match status" value="1"/>
</dbReference>
<dbReference type="FunFam" id="3.20.20.60:FF:000001">
    <property type="entry name" value="Pyruvate kinase"/>
    <property type="match status" value="1"/>
</dbReference>
<dbReference type="FunFam" id="3.40.1380.20:FF:000001">
    <property type="entry name" value="Pyruvate kinase"/>
    <property type="match status" value="1"/>
</dbReference>
<dbReference type="Gene3D" id="3.20.20.60">
    <property type="entry name" value="Phosphoenolpyruvate-binding domains"/>
    <property type="match status" value="1"/>
</dbReference>
<dbReference type="Gene3D" id="2.40.33.10">
    <property type="entry name" value="PK beta-barrel domain-like"/>
    <property type="match status" value="1"/>
</dbReference>
<dbReference type="Gene3D" id="3.40.1380.20">
    <property type="entry name" value="Pyruvate kinase, C-terminal domain"/>
    <property type="match status" value="1"/>
</dbReference>
<dbReference type="InterPro" id="IPR001697">
    <property type="entry name" value="Pyr_Knase"/>
</dbReference>
<dbReference type="InterPro" id="IPR015813">
    <property type="entry name" value="Pyrv/PenolPyrv_kinase-like_dom"/>
</dbReference>
<dbReference type="InterPro" id="IPR040442">
    <property type="entry name" value="Pyrv_kinase-like_dom_sf"/>
</dbReference>
<dbReference type="InterPro" id="IPR011037">
    <property type="entry name" value="Pyrv_Knase-like_insert_dom_sf"/>
</dbReference>
<dbReference type="InterPro" id="IPR018209">
    <property type="entry name" value="Pyrv_Knase_AS"/>
</dbReference>
<dbReference type="InterPro" id="IPR015793">
    <property type="entry name" value="Pyrv_Knase_brl"/>
</dbReference>
<dbReference type="InterPro" id="IPR015795">
    <property type="entry name" value="Pyrv_Knase_C"/>
</dbReference>
<dbReference type="InterPro" id="IPR036918">
    <property type="entry name" value="Pyrv_Knase_C_sf"/>
</dbReference>
<dbReference type="InterPro" id="IPR015806">
    <property type="entry name" value="Pyrv_Knase_insert_dom_sf"/>
</dbReference>
<dbReference type="NCBIfam" id="NF004491">
    <property type="entry name" value="PRK05826.1"/>
    <property type="match status" value="1"/>
</dbReference>
<dbReference type="NCBIfam" id="NF004978">
    <property type="entry name" value="PRK06354.1"/>
    <property type="match status" value="1"/>
</dbReference>
<dbReference type="NCBIfam" id="TIGR01064">
    <property type="entry name" value="pyruv_kin"/>
    <property type="match status" value="1"/>
</dbReference>
<dbReference type="PANTHER" id="PTHR11817">
    <property type="entry name" value="PYRUVATE KINASE"/>
    <property type="match status" value="1"/>
</dbReference>
<dbReference type="Pfam" id="PF00224">
    <property type="entry name" value="PK"/>
    <property type="match status" value="1"/>
</dbReference>
<dbReference type="Pfam" id="PF02887">
    <property type="entry name" value="PK_C"/>
    <property type="match status" value="1"/>
</dbReference>
<dbReference type="PRINTS" id="PR01050">
    <property type="entry name" value="PYRUVTKNASE"/>
</dbReference>
<dbReference type="SUPFAM" id="SSF51621">
    <property type="entry name" value="Phosphoenolpyruvate/pyruvate domain"/>
    <property type="match status" value="1"/>
</dbReference>
<dbReference type="SUPFAM" id="SSF50800">
    <property type="entry name" value="PK beta-barrel domain-like"/>
    <property type="match status" value="1"/>
</dbReference>
<dbReference type="SUPFAM" id="SSF52935">
    <property type="entry name" value="PK C-terminal domain-like"/>
    <property type="match status" value="1"/>
</dbReference>
<dbReference type="PROSITE" id="PS00110">
    <property type="entry name" value="PYRUVATE_KINASE"/>
    <property type="match status" value="1"/>
</dbReference>
<gene>
    <name type="primary">pkiA</name>
</gene>
<proteinExistence type="evidence at transcript level"/>
<protein>
    <recommendedName>
        <fullName>Pyruvate kinase</fullName>
        <shortName>PK</shortName>
        <ecNumber>2.7.1.40</ecNumber>
    </recommendedName>
</protein>
<comment type="catalytic activity">
    <reaction>
        <text>pyruvate + ATP = phosphoenolpyruvate + ADP + H(+)</text>
        <dbReference type="Rhea" id="RHEA:18157"/>
        <dbReference type="ChEBI" id="CHEBI:15361"/>
        <dbReference type="ChEBI" id="CHEBI:15378"/>
        <dbReference type="ChEBI" id="CHEBI:30616"/>
        <dbReference type="ChEBI" id="CHEBI:58702"/>
        <dbReference type="ChEBI" id="CHEBI:456216"/>
        <dbReference type="EC" id="2.7.1.40"/>
    </reaction>
</comment>
<comment type="cofactor">
    <cofactor evidence="1">
        <name>Mg(2+)</name>
        <dbReference type="ChEBI" id="CHEBI:18420"/>
    </cofactor>
</comment>
<comment type="cofactor">
    <cofactor evidence="1">
        <name>K(+)</name>
        <dbReference type="ChEBI" id="CHEBI:29103"/>
    </cofactor>
</comment>
<comment type="pathway">
    <text>Carbohydrate degradation; glycolysis; pyruvate from D-glyceraldehyde 3-phosphate: step 5/5.</text>
</comment>
<comment type="subunit">
    <text evidence="1">Homotetramer.</text>
</comment>
<comment type="similarity">
    <text evidence="4">Belongs to the pyruvate kinase family.</text>
</comment>
<accession>O94122</accession>
<accession>Q9UVX2</accession>